<dbReference type="EC" id="6.3.4.4" evidence="1"/>
<dbReference type="EMBL" id="CR626927">
    <property type="protein sequence ID" value="CAH08938.1"/>
    <property type="molecule type" value="Genomic_DNA"/>
</dbReference>
<dbReference type="RefSeq" id="WP_005789791.1">
    <property type="nucleotide sequence ID" value="NZ_UFTH01000001.1"/>
</dbReference>
<dbReference type="SMR" id="Q5LAD5"/>
<dbReference type="PaxDb" id="272559-BF9343_3157"/>
<dbReference type="KEGG" id="bfs:BF9343_3157"/>
<dbReference type="eggNOG" id="COG0104">
    <property type="taxonomic scope" value="Bacteria"/>
</dbReference>
<dbReference type="HOGENOM" id="CLU_029848_0_0_10"/>
<dbReference type="UniPathway" id="UPA00075">
    <property type="reaction ID" value="UER00335"/>
</dbReference>
<dbReference type="Proteomes" id="UP000006731">
    <property type="component" value="Chromosome"/>
</dbReference>
<dbReference type="GO" id="GO:0005737">
    <property type="term" value="C:cytoplasm"/>
    <property type="evidence" value="ECO:0007669"/>
    <property type="project" value="UniProtKB-SubCell"/>
</dbReference>
<dbReference type="GO" id="GO:0004019">
    <property type="term" value="F:adenylosuccinate synthase activity"/>
    <property type="evidence" value="ECO:0007669"/>
    <property type="project" value="UniProtKB-UniRule"/>
</dbReference>
<dbReference type="GO" id="GO:0005525">
    <property type="term" value="F:GTP binding"/>
    <property type="evidence" value="ECO:0007669"/>
    <property type="project" value="UniProtKB-UniRule"/>
</dbReference>
<dbReference type="GO" id="GO:0000287">
    <property type="term" value="F:magnesium ion binding"/>
    <property type="evidence" value="ECO:0007669"/>
    <property type="project" value="UniProtKB-UniRule"/>
</dbReference>
<dbReference type="GO" id="GO:0044208">
    <property type="term" value="P:'de novo' AMP biosynthetic process"/>
    <property type="evidence" value="ECO:0007669"/>
    <property type="project" value="UniProtKB-UniRule"/>
</dbReference>
<dbReference type="GO" id="GO:0046040">
    <property type="term" value="P:IMP metabolic process"/>
    <property type="evidence" value="ECO:0007669"/>
    <property type="project" value="TreeGrafter"/>
</dbReference>
<dbReference type="CDD" id="cd03108">
    <property type="entry name" value="AdSS"/>
    <property type="match status" value="1"/>
</dbReference>
<dbReference type="FunFam" id="1.10.300.10:FF:000003">
    <property type="entry name" value="Adenylosuccinate synthetase"/>
    <property type="match status" value="1"/>
</dbReference>
<dbReference type="FunFam" id="3.90.170.10:FF:000001">
    <property type="entry name" value="Adenylosuccinate synthetase"/>
    <property type="match status" value="1"/>
</dbReference>
<dbReference type="Gene3D" id="3.40.440.10">
    <property type="entry name" value="Adenylosuccinate Synthetase, subunit A, domain 1"/>
    <property type="match status" value="1"/>
</dbReference>
<dbReference type="Gene3D" id="1.10.300.10">
    <property type="entry name" value="Adenylosuccinate Synthetase, subunit A, domain 2"/>
    <property type="match status" value="1"/>
</dbReference>
<dbReference type="Gene3D" id="3.90.170.10">
    <property type="entry name" value="Adenylosuccinate Synthetase, subunit A, domain 3"/>
    <property type="match status" value="1"/>
</dbReference>
<dbReference type="HAMAP" id="MF_00011">
    <property type="entry name" value="Adenylosucc_synth"/>
    <property type="match status" value="1"/>
</dbReference>
<dbReference type="InterPro" id="IPR018220">
    <property type="entry name" value="Adenylosuccin_syn_GTP-bd"/>
</dbReference>
<dbReference type="InterPro" id="IPR033128">
    <property type="entry name" value="Adenylosuccin_syn_Lys_AS"/>
</dbReference>
<dbReference type="InterPro" id="IPR042109">
    <property type="entry name" value="Adenylosuccinate_synth_dom1"/>
</dbReference>
<dbReference type="InterPro" id="IPR042110">
    <property type="entry name" value="Adenylosuccinate_synth_dom2"/>
</dbReference>
<dbReference type="InterPro" id="IPR042111">
    <property type="entry name" value="Adenylosuccinate_synth_dom3"/>
</dbReference>
<dbReference type="InterPro" id="IPR001114">
    <property type="entry name" value="Adenylosuccinate_synthetase"/>
</dbReference>
<dbReference type="InterPro" id="IPR027417">
    <property type="entry name" value="P-loop_NTPase"/>
</dbReference>
<dbReference type="NCBIfam" id="NF002223">
    <property type="entry name" value="PRK01117.1"/>
    <property type="match status" value="1"/>
</dbReference>
<dbReference type="NCBIfam" id="TIGR00184">
    <property type="entry name" value="purA"/>
    <property type="match status" value="1"/>
</dbReference>
<dbReference type="PANTHER" id="PTHR11846">
    <property type="entry name" value="ADENYLOSUCCINATE SYNTHETASE"/>
    <property type="match status" value="1"/>
</dbReference>
<dbReference type="PANTHER" id="PTHR11846:SF0">
    <property type="entry name" value="ADENYLOSUCCINATE SYNTHETASE"/>
    <property type="match status" value="1"/>
</dbReference>
<dbReference type="Pfam" id="PF00709">
    <property type="entry name" value="Adenylsucc_synt"/>
    <property type="match status" value="1"/>
</dbReference>
<dbReference type="SMART" id="SM00788">
    <property type="entry name" value="Adenylsucc_synt"/>
    <property type="match status" value="1"/>
</dbReference>
<dbReference type="SUPFAM" id="SSF52540">
    <property type="entry name" value="P-loop containing nucleoside triphosphate hydrolases"/>
    <property type="match status" value="1"/>
</dbReference>
<dbReference type="PROSITE" id="PS01266">
    <property type="entry name" value="ADENYLOSUCCIN_SYN_1"/>
    <property type="match status" value="1"/>
</dbReference>
<dbReference type="PROSITE" id="PS00513">
    <property type="entry name" value="ADENYLOSUCCIN_SYN_2"/>
    <property type="match status" value="1"/>
</dbReference>
<gene>
    <name evidence="1" type="primary">purA</name>
    <name type="ordered locus">BF3243</name>
</gene>
<accession>Q5LAD5</accession>
<name>PURA_BACFN</name>
<organism>
    <name type="scientific">Bacteroides fragilis (strain ATCC 25285 / DSM 2151 / CCUG 4856 / JCM 11019 / LMG 10263 / NCTC 9343 / Onslow / VPI 2553 / EN-2)</name>
    <dbReference type="NCBI Taxonomy" id="272559"/>
    <lineage>
        <taxon>Bacteria</taxon>
        <taxon>Pseudomonadati</taxon>
        <taxon>Bacteroidota</taxon>
        <taxon>Bacteroidia</taxon>
        <taxon>Bacteroidales</taxon>
        <taxon>Bacteroidaceae</taxon>
        <taxon>Bacteroides</taxon>
    </lineage>
</organism>
<keyword id="KW-0963">Cytoplasm</keyword>
<keyword id="KW-0342">GTP-binding</keyword>
<keyword id="KW-0436">Ligase</keyword>
<keyword id="KW-0460">Magnesium</keyword>
<keyword id="KW-0479">Metal-binding</keyword>
<keyword id="KW-0547">Nucleotide-binding</keyword>
<keyword id="KW-0658">Purine biosynthesis</keyword>
<feature type="chain" id="PRO_0000224256" description="Adenylosuccinate synthetase">
    <location>
        <begin position="1"/>
        <end position="423"/>
    </location>
</feature>
<feature type="active site" description="Proton acceptor" evidence="1">
    <location>
        <position position="13"/>
    </location>
</feature>
<feature type="active site" description="Proton donor" evidence="1">
    <location>
        <position position="41"/>
    </location>
</feature>
<feature type="binding site" evidence="1">
    <location>
        <begin position="12"/>
        <end position="18"/>
    </location>
    <ligand>
        <name>GTP</name>
        <dbReference type="ChEBI" id="CHEBI:37565"/>
    </ligand>
</feature>
<feature type="binding site" description="in other chain" evidence="1">
    <location>
        <begin position="13"/>
        <end position="16"/>
    </location>
    <ligand>
        <name>IMP</name>
        <dbReference type="ChEBI" id="CHEBI:58053"/>
        <note>ligand shared between dimeric partners</note>
    </ligand>
</feature>
<feature type="binding site" evidence="1">
    <location>
        <position position="13"/>
    </location>
    <ligand>
        <name>Mg(2+)</name>
        <dbReference type="ChEBI" id="CHEBI:18420"/>
    </ligand>
</feature>
<feature type="binding site" description="in other chain" evidence="1">
    <location>
        <begin position="38"/>
        <end position="41"/>
    </location>
    <ligand>
        <name>IMP</name>
        <dbReference type="ChEBI" id="CHEBI:58053"/>
        <note>ligand shared between dimeric partners</note>
    </ligand>
</feature>
<feature type="binding site" evidence="1">
    <location>
        <begin position="40"/>
        <end position="42"/>
    </location>
    <ligand>
        <name>GTP</name>
        <dbReference type="ChEBI" id="CHEBI:37565"/>
    </ligand>
</feature>
<feature type="binding site" evidence="1">
    <location>
        <position position="40"/>
    </location>
    <ligand>
        <name>Mg(2+)</name>
        <dbReference type="ChEBI" id="CHEBI:18420"/>
    </ligand>
</feature>
<feature type="binding site" description="in other chain" evidence="1">
    <location>
        <position position="129"/>
    </location>
    <ligand>
        <name>IMP</name>
        <dbReference type="ChEBI" id="CHEBI:58053"/>
        <note>ligand shared between dimeric partners</note>
    </ligand>
</feature>
<feature type="binding site" evidence="1">
    <location>
        <position position="143"/>
    </location>
    <ligand>
        <name>IMP</name>
        <dbReference type="ChEBI" id="CHEBI:58053"/>
        <note>ligand shared between dimeric partners</note>
    </ligand>
</feature>
<feature type="binding site" description="in other chain" evidence="1">
    <location>
        <position position="221"/>
    </location>
    <ligand>
        <name>IMP</name>
        <dbReference type="ChEBI" id="CHEBI:58053"/>
        <note>ligand shared between dimeric partners</note>
    </ligand>
</feature>
<feature type="binding site" description="in other chain" evidence="1">
    <location>
        <position position="236"/>
    </location>
    <ligand>
        <name>IMP</name>
        <dbReference type="ChEBI" id="CHEBI:58053"/>
        <note>ligand shared between dimeric partners</note>
    </ligand>
</feature>
<feature type="binding site" evidence="1">
    <location>
        <begin position="296"/>
        <end position="302"/>
    </location>
    <ligand>
        <name>substrate</name>
    </ligand>
</feature>
<feature type="binding site" description="in other chain" evidence="1">
    <location>
        <position position="300"/>
    </location>
    <ligand>
        <name>IMP</name>
        <dbReference type="ChEBI" id="CHEBI:58053"/>
        <note>ligand shared between dimeric partners</note>
    </ligand>
</feature>
<feature type="binding site" evidence="1">
    <location>
        <position position="302"/>
    </location>
    <ligand>
        <name>GTP</name>
        <dbReference type="ChEBI" id="CHEBI:37565"/>
    </ligand>
</feature>
<feature type="binding site" evidence="1">
    <location>
        <begin position="328"/>
        <end position="330"/>
    </location>
    <ligand>
        <name>GTP</name>
        <dbReference type="ChEBI" id="CHEBI:37565"/>
    </ligand>
</feature>
<feature type="binding site" evidence="1">
    <location>
        <begin position="408"/>
        <end position="410"/>
    </location>
    <ligand>
        <name>GTP</name>
        <dbReference type="ChEBI" id="CHEBI:37565"/>
    </ligand>
</feature>
<proteinExistence type="inferred from homology"/>
<protein>
    <recommendedName>
        <fullName evidence="1">Adenylosuccinate synthetase</fullName>
        <shortName evidence="1">AMPSase</shortName>
        <shortName evidence="1">AdSS</shortName>
        <ecNumber evidence="1">6.3.4.4</ecNumber>
    </recommendedName>
    <alternativeName>
        <fullName evidence="1">IMP--aspartate ligase</fullName>
    </alternativeName>
</protein>
<evidence type="ECO:0000255" key="1">
    <source>
        <dbReference type="HAMAP-Rule" id="MF_00011"/>
    </source>
</evidence>
<sequence length="423" mass="46799">MKVDVLLGLQWGDEGKGKVVDVLTPKYDVVARFQGGPNAGHTLEFEGQKYVLRSIPSGIFQGDKVNIIGNGVVLDPALFKAEAEALEASGHNLKERLHISKKAHLILPTHRILDAAYEAAKGDAKVGTTGKGIGPTYTDKVSRNGVRVGDILHNFEQKYAAAKARHEQILKGLNYEYDLTELEKAWFEGIEYLKQFQLVDSEHEINGLLDNGKSILCEGAQGTMLDIDFGSYPFVTSSNTVCAGACTGLGVAPNKIGDVYGIFKAYCTRVGSGPFPTELFDKTGDQICTLGHEFGSVTGRKRRCGWVDLVALKYSIMVNGVTKLIMMKSDVLDTFETIKACVAYKMNGEEIDYFPYDITDEVEPIYVELPGWQTDMTKMQSEDEFPEEFNAYLSFLEEQLGVQIKIVSVGPDREQTIIRYTEE</sequence>
<comment type="function">
    <text evidence="1">Plays an important role in the de novo pathway of purine nucleotide biosynthesis. Catalyzes the first committed step in the biosynthesis of AMP from IMP.</text>
</comment>
<comment type="catalytic activity">
    <reaction evidence="1">
        <text>IMP + L-aspartate + GTP = N(6)-(1,2-dicarboxyethyl)-AMP + GDP + phosphate + 2 H(+)</text>
        <dbReference type="Rhea" id="RHEA:15753"/>
        <dbReference type="ChEBI" id="CHEBI:15378"/>
        <dbReference type="ChEBI" id="CHEBI:29991"/>
        <dbReference type="ChEBI" id="CHEBI:37565"/>
        <dbReference type="ChEBI" id="CHEBI:43474"/>
        <dbReference type="ChEBI" id="CHEBI:57567"/>
        <dbReference type="ChEBI" id="CHEBI:58053"/>
        <dbReference type="ChEBI" id="CHEBI:58189"/>
        <dbReference type="EC" id="6.3.4.4"/>
    </reaction>
</comment>
<comment type="cofactor">
    <cofactor evidence="1">
        <name>Mg(2+)</name>
        <dbReference type="ChEBI" id="CHEBI:18420"/>
    </cofactor>
    <text evidence="1">Binds 1 Mg(2+) ion per subunit.</text>
</comment>
<comment type="pathway">
    <text evidence="1">Purine metabolism; AMP biosynthesis via de novo pathway; AMP from IMP: step 1/2.</text>
</comment>
<comment type="subunit">
    <text evidence="1">Homodimer.</text>
</comment>
<comment type="subcellular location">
    <subcellularLocation>
        <location evidence="1">Cytoplasm</location>
    </subcellularLocation>
</comment>
<comment type="similarity">
    <text evidence="1">Belongs to the adenylosuccinate synthetase family.</text>
</comment>
<reference key="1">
    <citation type="journal article" date="2005" name="Science">
        <title>Extensive DNA inversions in the B. fragilis genome control variable gene expression.</title>
        <authorList>
            <person name="Cerdeno-Tarraga A.-M."/>
            <person name="Patrick S."/>
            <person name="Crossman L.C."/>
            <person name="Blakely G."/>
            <person name="Abratt V."/>
            <person name="Lennard N."/>
            <person name="Poxton I."/>
            <person name="Duerden B."/>
            <person name="Harris B."/>
            <person name="Quail M.A."/>
            <person name="Barron A."/>
            <person name="Clark L."/>
            <person name="Corton C."/>
            <person name="Doggett J."/>
            <person name="Holden M.T.G."/>
            <person name="Larke N."/>
            <person name="Line A."/>
            <person name="Lord A."/>
            <person name="Norbertczak H."/>
            <person name="Ormond D."/>
            <person name="Price C."/>
            <person name="Rabbinowitsch E."/>
            <person name="Woodward J."/>
            <person name="Barrell B.G."/>
            <person name="Parkhill J."/>
        </authorList>
    </citation>
    <scope>NUCLEOTIDE SEQUENCE [LARGE SCALE GENOMIC DNA]</scope>
    <source>
        <strain>ATCC 25285 / DSM 2151 / CCUG 4856 / JCM 11019 / LMG 10263 / NCTC 9343 / Onslow / VPI 2553 / EN-2</strain>
    </source>
</reference>